<name>PRP28_PHANO</name>
<proteinExistence type="inferred from homology"/>
<gene>
    <name type="primary">PRP28</name>
    <name type="ORF">SNOG_03936</name>
</gene>
<comment type="function">
    <text evidence="1">ATP-dependent RNA helicase involved in mRNA splicing. May destabilize the U1/5'-splice site duplex to permit an effective competition for the 5'-splice site by the U6 snRNA, resulting in the switch between U1 and U6 at the 5'-splice site. May also act to unwind the U4/U6 base-pairing interaction in the U4/U6/U5 snRNP, facilitating the first covalent step of splicing (By similarity).</text>
</comment>
<comment type="catalytic activity">
    <reaction>
        <text>ATP + H2O = ADP + phosphate + H(+)</text>
        <dbReference type="Rhea" id="RHEA:13065"/>
        <dbReference type="ChEBI" id="CHEBI:15377"/>
        <dbReference type="ChEBI" id="CHEBI:15378"/>
        <dbReference type="ChEBI" id="CHEBI:30616"/>
        <dbReference type="ChEBI" id="CHEBI:43474"/>
        <dbReference type="ChEBI" id="CHEBI:456216"/>
        <dbReference type="EC" id="3.6.4.13"/>
    </reaction>
</comment>
<comment type="subunit">
    <text evidence="1">Component of the U5 snRNP complex.</text>
</comment>
<comment type="subcellular location">
    <subcellularLocation>
        <location evidence="1">Cytoplasm</location>
    </subcellularLocation>
    <subcellularLocation>
        <location evidence="1">Nucleus</location>
    </subcellularLocation>
</comment>
<comment type="domain">
    <text>The Q motif is unique to and characteristic of the DEAD box family of RNA helicases and controls ATP binding and hydrolysis.</text>
</comment>
<comment type="similarity">
    <text evidence="5">Belongs to the DEAD box helicase family. DDX23/PRP28 subfamily.</text>
</comment>
<comment type="sequence caution" evidence="5">
    <conflict type="erroneous initiation">
        <sequence resource="EMBL-CDS" id="EAT89141"/>
    </conflict>
</comment>
<accession>Q0UWC8</accession>
<dbReference type="EC" id="3.6.4.13"/>
<dbReference type="EMBL" id="CH445329">
    <property type="protein sequence ID" value="EAT89141.2"/>
    <property type="status" value="ALT_INIT"/>
    <property type="molecule type" value="Genomic_DNA"/>
</dbReference>
<dbReference type="RefSeq" id="XP_001794480.1">
    <property type="nucleotide sequence ID" value="XM_001794428.1"/>
</dbReference>
<dbReference type="SMR" id="Q0UWC8"/>
<dbReference type="FunCoup" id="Q0UWC8">
    <property type="interactions" value="841"/>
</dbReference>
<dbReference type="STRING" id="321614.Q0UWC8"/>
<dbReference type="GeneID" id="5971343"/>
<dbReference type="KEGG" id="pno:SNOG_03936"/>
<dbReference type="VEuPathDB" id="FungiDB:JI435_039360"/>
<dbReference type="eggNOG" id="KOG0333">
    <property type="taxonomic scope" value="Eukaryota"/>
</dbReference>
<dbReference type="InParanoid" id="Q0UWC8"/>
<dbReference type="OMA" id="ARDIKHM"/>
<dbReference type="OrthoDB" id="196131at2759"/>
<dbReference type="Proteomes" id="UP000001055">
    <property type="component" value="Unassembled WGS sequence"/>
</dbReference>
<dbReference type="GO" id="GO:0071013">
    <property type="term" value="C:catalytic step 2 spliceosome"/>
    <property type="evidence" value="ECO:0000318"/>
    <property type="project" value="GO_Central"/>
</dbReference>
<dbReference type="GO" id="GO:0005737">
    <property type="term" value="C:cytoplasm"/>
    <property type="evidence" value="ECO:0007669"/>
    <property type="project" value="UniProtKB-SubCell"/>
</dbReference>
<dbReference type="GO" id="GO:0005524">
    <property type="term" value="F:ATP binding"/>
    <property type="evidence" value="ECO:0007669"/>
    <property type="project" value="UniProtKB-KW"/>
</dbReference>
<dbReference type="GO" id="GO:0016887">
    <property type="term" value="F:ATP hydrolysis activity"/>
    <property type="evidence" value="ECO:0007669"/>
    <property type="project" value="RHEA"/>
</dbReference>
<dbReference type="GO" id="GO:0003729">
    <property type="term" value="F:mRNA binding"/>
    <property type="evidence" value="ECO:0000318"/>
    <property type="project" value="GO_Central"/>
</dbReference>
<dbReference type="GO" id="GO:0003724">
    <property type="term" value="F:RNA helicase activity"/>
    <property type="evidence" value="ECO:0007669"/>
    <property type="project" value="UniProtKB-EC"/>
</dbReference>
<dbReference type="GO" id="GO:0000398">
    <property type="term" value="P:mRNA splicing, via spliceosome"/>
    <property type="evidence" value="ECO:0000318"/>
    <property type="project" value="GO_Central"/>
</dbReference>
<dbReference type="CDD" id="cd17945">
    <property type="entry name" value="DEADc_DDX23"/>
    <property type="match status" value="1"/>
</dbReference>
<dbReference type="CDD" id="cd18787">
    <property type="entry name" value="SF2_C_DEAD"/>
    <property type="match status" value="1"/>
</dbReference>
<dbReference type="FunFam" id="3.40.50.300:FF:000322">
    <property type="entry name" value="probable ATP-dependent RNA helicase DDX23"/>
    <property type="match status" value="1"/>
</dbReference>
<dbReference type="Gene3D" id="3.40.50.300">
    <property type="entry name" value="P-loop containing nucleotide triphosphate hydrolases"/>
    <property type="match status" value="2"/>
</dbReference>
<dbReference type="InterPro" id="IPR011545">
    <property type="entry name" value="DEAD/DEAH_box_helicase_dom"/>
</dbReference>
<dbReference type="InterPro" id="IPR014001">
    <property type="entry name" value="Helicase_ATP-bd"/>
</dbReference>
<dbReference type="InterPro" id="IPR001650">
    <property type="entry name" value="Helicase_C-like"/>
</dbReference>
<dbReference type="InterPro" id="IPR027417">
    <property type="entry name" value="P-loop_NTPase"/>
</dbReference>
<dbReference type="InterPro" id="IPR000629">
    <property type="entry name" value="RNA-helicase_DEAD-box_CS"/>
</dbReference>
<dbReference type="InterPro" id="IPR014014">
    <property type="entry name" value="RNA_helicase_DEAD_Q_motif"/>
</dbReference>
<dbReference type="PANTHER" id="PTHR47958">
    <property type="entry name" value="ATP-DEPENDENT RNA HELICASE DBP3"/>
    <property type="match status" value="1"/>
</dbReference>
<dbReference type="Pfam" id="PF25430">
    <property type="entry name" value="DDX23"/>
    <property type="match status" value="1"/>
</dbReference>
<dbReference type="Pfam" id="PF00270">
    <property type="entry name" value="DEAD"/>
    <property type="match status" value="1"/>
</dbReference>
<dbReference type="Pfam" id="PF00271">
    <property type="entry name" value="Helicase_C"/>
    <property type="match status" value="1"/>
</dbReference>
<dbReference type="SMART" id="SM00487">
    <property type="entry name" value="DEXDc"/>
    <property type="match status" value="1"/>
</dbReference>
<dbReference type="SMART" id="SM00490">
    <property type="entry name" value="HELICc"/>
    <property type="match status" value="1"/>
</dbReference>
<dbReference type="SUPFAM" id="SSF52540">
    <property type="entry name" value="P-loop containing nucleoside triphosphate hydrolases"/>
    <property type="match status" value="1"/>
</dbReference>
<dbReference type="PROSITE" id="PS00039">
    <property type="entry name" value="DEAD_ATP_HELICASE"/>
    <property type="match status" value="1"/>
</dbReference>
<dbReference type="PROSITE" id="PS51192">
    <property type="entry name" value="HELICASE_ATP_BIND_1"/>
    <property type="match status" value="1"/>
</dbReference>
<dbReference type="PROSITE" id="PS51194">
    <property type="entry name" value="HELICASE_CTER"/>
    <property type="match status" value="1"/>
</dbReference>
<dbReference type="PROSITE" id="PS51195">
    <property type="entry name" value="Q_MOTIF"/>
    <property type="match status" value="1"/>
</dbReference>
<evidence type="ECO:0000250" key="1"/>
<evidence type="ECO:0000255" key="2">
    <source>
        <dbReference type="PROSITE-ProRule" id="PRU00541"/>
    </source>
</evidence>
<evidence type="ECO:0000255" key="3">
    <source>
        <dbReference type="PROSITE-ProRule" id="PRU00542"/>
    </source>
</evidence>
<evidence type="ECO:0000256" key="4">
    <source>
        <dbReference type="SAM" id="MobiDB-lite"/>
    </source>
</evidence>
<evidence type="ECO:0000305" key="5"/>
<sequence length="746" mass="83308">MTDTTLPPPPPPPPPPADKMPPPPPTDVPPPPPPQEEELGPVLVPSKKAKKGWASQRKQPPSIDDILKAKREQEAAAAKPKFLSKAERERIALEKRRKEVEEAQRRREGSNSSTNGASHKGHYDASSSIPTGPRAMRPEAPSGPPSRQQRSNGDMAPPPLPDKKTGKRPPPEDAEAAMIRQRYMGAEQNQSTFSAKKKRKRTTEKKFNFEWNEEEDTSYDYNPIYQQKAEAGFFGRGRLGGFTEDVTEQGTQKFIEAMIERDPVSGRERAERILDMERRRKEEGGRAQLDKHWSEKKLEHMRERDWRIFKEDFNIATKGGAIPNPMRNWQESGLPDKVLRLVEHVGYAEPSAVQRAAIPIALQCRDLIGVAVTGSGKTASFVLPLLVYISQLPPLGPSNRADGPYAIVLAPTRELAQQIEVETRKFAAPLGFNTAVIVGGHSIEEQAFQMRDGAEIVIATPGRLVDCIERRMLVLSQCTYVIMDEADRMIDMGFEEPVNKILDALPVTNEKPDSDAAEDPNAMKRGMYRQTMMYTATMPTAVERIARKYLRRPAIVTIGNVGEAVETVEQRVEHIQGEEKRKKRLQEILNSGEFTPPIIVFVNIKRNCDAIARDIKNMGFSSVTLHGSKTQEQREAALAQLREHRVDVLVATDLAGRGIDITDVSLVVNFNMATSIESYTHRIGRTGRAGKSGVAITFWGNEDADVLYDLKQMLTKSQISKVPEDLRKHEAAQQKGGRNKEKKALT</sequence>
<organism>
    <name type="scientific">Phaeosphaeria nodorum (strain SN15 / ATCC MYA-4574 / FGSC 10173)</name>
    <name type="common">Glume blotch fungus</name>
    <name type="synonym">Parastagonospora nodorum</name>
    <dbReference type="NCBI Taxonomy" id="321614"/>
    <lineage>
        <taxon>Eukaryota</taxon>
        <taxon>Fungi</taxon>
        <taxon>Dikarya</taxon>
        <taxon>Ascomycota</taxon>
        <taxon>Pezizomycotina</taxon>
        <taxon>Dothideomycetes</taxon>
        <taxon>Pleosporomycetidae</taxon>
        <taxon>Pleosporales</taxon>
        <taxon>Pleosporineae</taxon>
        <taxon>Phaeosphaeriaceae</taxon>
        <taxon>Parastagonospora</taxon>
    </lineage>
</organism>
<keyword id="KW-0067">ATP-binding</keyword>
<keyword id="KW-0963">Cytoplasm</keyword>
<keyword id="KW-0347">Helicase</keyword>
<keyword id="KW-0378">Hydrolase</keyword>
<keyword id="KW-0507">mRNA processing</keyword>
<keyword id="KW-0508">mRNA splicing</keyword>
<keyword id="KW-0547">Nucleotide-binding</keyword>
<keyword id="KW-0539">Nucleus</keyword>
<reference key="1">
    <citation type="journal article" date="2007" name="Plant Cell">
        <title>Dothideomycete-plant interactions illuminated by genome sequencing and EST analysis of the wheat pathogen Stagonospora nodorum.</title>
        <authorList>
            <person name="Hane J.K."/>
            <person name="Lowe R.G.T."/>
            <person name="Solomon P.S."/>
            <person name="Tan K.-C."/>
            <person name="Schoch C.L."/>
            <person name="Spatafora J.W."/>
            <person name="Crous P.W."/>
            <person name="Kodira C.D."/>
            <person name="Birren B.W."/>
            <person name="Galagan J.E."/>
            <person name="Torriani S.F.F."/>
            <person name="McDonald B.A."/>
            <person name="Oliver R.P."/>
        </authorList>
    </citation>
    <scope>NUCLEOTIDE SEQUENCE [LARGE SCALE GENOMIC DNA]</scope>
    <source>
        <strain>SN15 / ATCC MYA-4574 / FGSC 10173</strain>
    </source>
</reference>
<protein>
    <recommendedName>
        <fullName>Pre-mRNA-splicing ATP-dependent RNA helicase PRP28</fullName>
        <ecNumber>3.6.4.13</ecNumber>
    </recommendedName>
</protein>
<feature type="chain" id="PRO_0000256019" description="Pre-mRNA-splicing ATP-dependent RNA helicase PRP28">
    <location>
        <begin position="1"/>
        <end position="746"/>
    </location>
</feature>
<feature type="domain" description="Helicase ATP-binding" evidence="2">
    <location>
        <begin position="358"/>
        <end position="556"/>
    </location>
</feature>
<feature type="domain" description="Helicase C-terminal" evidence="3">
    <location>
        <begin position="567"/>
        <end position="730"/>
    </location>
</feature>
<feature type="region of interest" description="Disordered" evidence="4">
    <location>
        <begin position="1"/>
        <end position="203"/>
    </location>
</feature>
<feature type="region of interest" description="Disordered" evidence="4">
    <location>
        <begin position="721"/>
        <end position="746"/>
    </location>
</feature>
<feature type="short sequence motif" description="Q motif">
    <location>
        <begin position="327"/>
        <end position="355"/>
    </location>
</feature>
<feature type="short sequence motif" description="DEAD box">
    <location>
        <begin position="484"/>
        <end position="487"/>
    </location>
</feature>
<feature type="compositionally biased region" description="Pro residues" evidence="4">
    <location>
        <begin position="1"/>
        <end position="34"/>
    </location>
</feature>
<feature type="compositionally biased region" description="Basic and acidic residues" evidence="4">
    <location>
        <begin position="65"/>
        <end position="74"/>
    </location>
</feature>
<feature type="compositionally biased region" description="Basic and acidic residues" evidence="4">
    <location>
        <begin position="84"/>
        <end position="109"/>
    </location>
</feature>
<feature type="compositionally biased region" description="Basic and acidic residues" evidence="4">
    <location>
        <begin position="722"/>
        <end position="746"/>
    </location>
</feature>
<feature type="binding site" evidence="2">
    <location>
        <begin position="371"/>
        <end position="378"/>
    </location>
    <ligand>
        <name>ATP</name>
        <dbReference type="ChEBI" id="CHEBI:30616"/>
    </ligand>
</feature>